<organism>
    <name type="scientific">Caulobacter vibrioides (strain ATCC 19089 / CIP 103742 / CB 15)</name>
    <name type="common">Caulobacter crescentus</name>
    <dbReference type="NCBI Taxonomy" id="190650"/>
    <lineage>
        <taxon>Bacteria</taxon>
        <taxon>Pseudomonadati</taxon>
        <taxon>Pseudomonadota</taxon>
        <taxon>Alphaproteobacteria</taxon>
        <taxon>Caulobacterales</taxon>
        <taxon>Caulobacteraceae</taxon>
        <taxon>Caulobacter</taxon>
    </lineage>
</organism>
<reference key="1">
    <citation type="journal article" date="2001" name="Proc. Natl. Acad. Sci. U.S.A.">
        <title>Complete genome sequence of Caulobacter crescentus.</title>
        <authorList>
            <person name="Nierman W.C."/>
            <person name="Feldblyum T.V."/>
            <person name="Laub M.T."/>
            <person name="Paulsen I.T."/>
            <person name="Nelson K.E."/>
            <person name="Eisen J.A."/>
            <person name="Heidelberg J.F."/>
            <person name="Alley M.R.K."/>
            <person name="Ohta N."/>
            <person name="Maddock J.R."/>
            <person name="Potocka I."/>
            <person name="Nelson W.C."/>
            <person name="Newton A."/>
            <person name="Stephens C."/>
            <person name="Phadke N.D."/>
            <person name="Ely B."/>
            <person name="DeBoy R.T."/>
            <person name="Dodson R.J."/>
            <person name="Durkin A.S."/>
            <person name="Gwinn M.L."/>
            <person name="Haft D.H."/>
            <person name="Kolonay J.F."/>
            <person name="Smit J."/>
            <person name="Craven M.B."/>
            <person name="Khouri H.M."/>
            <person name="Shetty J."/>
            <person name="Berry K.J."/>
            <person name="Utterback T.R."/>
            <person name="Tran K."/>
            <person name="Wolf A.M."/>
            <person name="Vamathevan J.J."/>
            <person name="Ermolaeva M.D."/>
            <person name="White O."/>
            <person name="Salzberg S.L."/>
            <person name="Venter J.C."/>
            <person name="Shapiro L."/>
            <person name="Fraser C.M."/>
        </authorList>
    </citation>
    <scope>NUCLEOTIDE SEQUENCE [LARGE SCALE GENOMIC DNA]</scope>
    <source>
        <strain>ATCC 19089 / CIP 103742 / CB 15</strain>
    </source>
</reference>
<protein>
    <recommendedName>
        <fullName evidence="1">Elongation factor Ts</fullName>
        <shortName evidence="1">EF-Ts</shortName>
    </recommendedName>
</protein>
<accession>Q9A704</accession>
<feature type="chain" id="PRO_0000161100" description="Elongation factor Ts">
    <location>
        <begin position="1"/>
        <end position="312"/>
    </location>
</feature>
<feature type="region of interest" description="Involved in Mg(2+) ion dislocation from EF-Tu" evidence="1">
    <location>
        <begin position="84"/>
        <end position="87"/>
    </location>
</feature>
<sequence length="312" mass="32621">MAEITAALVKELREKSGVGMMDCKKALAENNGDIEASIDWLRAKGLSKAAKKADRAAAEGLVAIATAEQGAGETATAVEVNAETDFVSRNDLFQGAARQIAGAALGTDGSVDAITAAKLAGGETVQDHLTNLIATIGENMMVRRAAKWTVENGVVASYIHNATAPDLGRIGVLVAVESTGDKAALRELGRKIAMHVAATSPLSLSPDDLDPAAIEREKAVFTEQALESGKPAAVVEKMIEGRIRKFLEEVVLLKQAFVMNPDQTVEQLVAETAKTLGAPVAVKGFTRLALGEGVEKKQDDFAAEVASMTGQA</sequence>
<comment type="function">
    <text evidence="1">Associates with the EF-Tu.GDP complex and induces the exchange of GDP to GTP. It remains bound to the aminoacyl-tRNA.EF-Tu.GTP complex up to the GTP hydrolysis stage on the ribosome.</text>
</comment>
<comment type="subcellular location">
    <subcellularLocation>
        <location evidence="1">Cytoplasm</location>
    </subcellularLocation>
</comment>
<comment type="similarity">
    <text evidence="1">Belongs to the EF-Ts family.</text>
</comment>
<evidence type="ECO:0000255" key="1">
    <source>
        <dbReference type="HAMAP-Rule" id="MF_00050"/>
    </source>
</evidence>
<gene>
    <name evidence="1" type="primary">tsf</name>
    <name type="ordered locus">CC_1922</name>
</gene>
<proteinExistence type="inferred from homology"/>
<name>EFTS_CAUVC</name>
<keyword id="KW-0963">Cytoplasm</keyword>
<keyword id="KW-0251">Elongation factor</keyword>
<keyword id="KW-0648">Protein biosynthesis</keyword>
<keyword id="KW-1185">Reference proteome</keyword>
<dbReference type="EMBL" id="AE005673">
    <property type="protein sequence ID" value="AAK23897.1"/>
    <property type="molecule type" value="Genomic_DNA"/>
</dbReference>
<dbReference type="PIR" id="E87487">
    <property type="entry name" value="E87487"/>
</dbReference>
<dbReference type="RefSeq" id="NP_420729.1">
    <property type="nucleotide sequence ID" value="NC_002696.2"/>
</dbReference>
<dbReference type="RefSeq" id="WP_010919788.1">
    <property type="nucleotide sequence ID" value="NC_002696.2"/>
</dbReference>
<dbReference type="SMR" id="Q9A704"/>
<dbReference type="STRING" id="190650.CC_1922"/>
<dbReference type="EnsemblBacteria" id="AAK23897">
    <property type="protein sequence ID" value="AAK23897"/>
    <property type="gene ID" value="CC_1922"/>
</dbReference>
<dbReference type="KEGG" id="ccr:CC_1922"/>
<dbReference type="PATRIC" id="fig|190650.5.peg.1939"/>
<dbReference type="eggNOG" id="COG0264">
    <property type="taxonomic scope" value="Bacteria"/>
</dbReference>
<dbReference type="HOGENOM" id="CLU_047155_2_0_5"/>
<dbReference type="BioCyc" id="CAULO:CC1922-MONOMER"/>
<dbReference type="Proteomes" id="UP000001816">
    <property type="component" value="Chromosome"/>
</dbReference>
<dbReference type="GO" id="GO:0005737">
    <property type="term" value="C:cytoplasm"/>
    <property type="evidence" value="ECO:0007669"/>
    <property type="project" value="UniProtKB-SubCell"/>
</dbReference>
<dbReference type="GO" id="GO:0003746">
    <property type="term" value="F:translation elongation factor activity"/>
    <property type="evidence" value="ECO:0007669"/>
    <property type="project" value="UniProtKB-UniRule"/>
</dbReference>
<dbReference type="CDD" id="cd14275">
    <property type="entry name" value="UBA_EF-Ts"/>
    <property type="match status" value="1"/>
</dbReference>
<dbReference type="FunFam" id="1.10.286.20:FF:000001">
    <property type="entry name" value="Elongation factor Ts"/>
    <property type="match status" value="1"/>
</dbReference>
<dbReference type="FunFam" id="1.10.8.10:FF:000001">
    <property type="entry name" value="Elongation factor Ts"/>
    <property type="match status" value="1"/>
</dbReference>
<dbReference type="Gene3D" id="1.10.286.20">
    <property type="match status" value="1"/>
</dbReference>
<dbReference type="Gene3D" id="1.10.8.10">
    <property type="entry name" value="DNA helicase RuvA subunit, C-terminal domain"/>
    <property type="match status" value="1"/>
</dbReference>
<dbReference type="Gene3D" id="3.30.479.20">
    <property type="entry name" value="Elongation factor Ts, dimerisation domain"/>
    <property type="match status" value="2"/>
</dbReference>
<dbReference type="HAMAP" id="MF_00050">
    <property type="entry name" value="EF_Ts"/>
    <property type="match status" value="1"/>
</dbReference>
<dbReference type="InterPro" id="IPR036402">
    <property type="entry name" value="EF-Ts_dimer_sf"/>
</dbReference>
<dbReference type="InterPro" id="IPR001816">
    <property type="entry name" value="Transl_elong_EFTs/EF1B"/>
</dbReference>
<dbReference type="InterPro" id="IPR014039">
    <property type="entry name" value="Transl_elong_EFTs/EF1B_dimer"/>
</dbReference>
<dbReference type="InterPro" id="IPR018101">
    <property type="entry name" value="Transl_elong_Ts_CS"/>
</dbReference>
<dbReference type="InterPro" id="IPR009060">
    <property type="entry name" value="UBA-like_sf"/>
</dbReference>
<dbReference type="NCBIfam" id="TIGR00116">
    <property type="entry name" value="tsf"/>
    <property type="match status" value="1"/>
</dbReference>
<dbReference type="PANTHER" id="PTHR11741">
    <property type="entry name" value="ELONGATION FACTOR TS"/>
    <property type="match status" value="1"/>
</dbReference>
<dbReference type="PANTHER" id="PTHR11741:SF0">
    <property type="entry name" value="ELONGATION FACTOR TS, MITOCHONDRIAL"/>
    <property type="match status" value="1"/>
</dbReference>
<dbReference type="Pfam" id="PF00889">
    <property type="entry name" value="EF_TS"/>
    <property type="match status" value="1"/>
</dbReference>
<dbReference type="SUPFAM" id="SSF54713">
    <property type="entry name" value="Elongation factor Ts (EF-Ts), dimerisation domain"/>
    <property type="match status" value="2"/>
</dbReference>
<dbReference type="SUPFAM" id="SSF46934">
    <property type="entry name" value="UBA-like"/>
    <property type="match status" value="1"/>
</dbReference>
<dbReference type="PROSITE" id="PS01126">
    <property type="entry name" value="EF_TS_1"/>
    <property type="match status" value="1"/>
</dbReference>
<dbReference type="PROSITE" id="PS01127">
    <property type="entry name" value="EF_TS_2"/>
    <property type="match status" value="1"/>
</dbReference>